<proteinExistence type="evidence at transcript level"/>
<name>CT2NL_PONAB</name>
<accession>Q5RDH2</accession>
<organism>
    <name type="scientific">Pongo abelii</name>
    <name type="common">Sumatran orangutan</name>
    <name type="synonym">Pongo pygmaeus abelii</name>
    <dbReference type="NCBI Taxonomy" id="9601"/>
    <lineage>
        <taxon>Eukaryota</taxon>
        <taxon>Metazoa</taxon>
        <taxon>Chordata</taxon>
        <taxon>Craniata</taxon>
        <taxon>Vertebrata</taxon>
        <taxon>Euteleostomi</taxon>
        <taxon>Mammalia</taxon>
        <taxon>Eutheria</taxon>
        <taxon>Euarchontoglires</taxon>
        <taxon>Primates</taxon>
        <taxon>Haplorrhini</taxon>
        <taxon>Catarrhini</taxon>
        <taxon>Hominidae</taxon>
        <taxon>Pongo</taxon>
    </lineage>
</organism>
<protein>
    <recommendedName>
        <fullName>CTTNBP2 N-terminal-like protein</fullName>
    </recommendedName>
</protein>
<sequence>MNLEKLSKPELLTLFSILEGELEARDLVIEALKAQHRDTFIEERYGKYNISDPLMALQRDFETLKEKNDGEKQPVCTNPLSILKVVMKQCKNMQERMLSQLAAAESRHRKVILDLEEERQRHAQDTAEGDDVTYMLEKERERLTQQLEFEKSQVKKFEKEQKKLSSQLEEERSRHKQLSSMLVLECKKATNKAAEEGQKAGELSLKLEKEKSRVSKLEEELAAERKRGLQTEAQVEKQLSEFDIEREQLRAKLNREENRTKTLKEEMESLKKIVKDLEASHQHSSPNEQLKKPVTVSKGTATEPLMLMSVFCQTESFPAERTHGSNIAKMTNTGLPGPATPAYSYAKTNGHCDPEIQTTRELTAGNNVENQVPPREKSVALAQEKPVENGGCPVGIETPVPMPSPLPSSGSSLSPSSTASSSLTSSPCSSPVLTKRLLGSSASSPGYQSSYQVGINQRFHAARHKFQSQADQDQQASGLQSPPSRDLSPTLIDNSAAKQLARNTVTQVLSRFTSQQGPIKPVSPNSSPFGTDYRNLANTANPRGDTSHSPTPGKVSSPLSPLSPGIKSPTIPRAERGNPPPIPPKKPGLTPSPSATTPLTKTHSQAASLTTAEDLASSCSSNTVVANGKDVELLLPTSS</sequence>
<reference key="1">
    <citation type="submission" date="2004-11" db="EMBL/GenBank/DDBJ databases">
        <authorList>
            <consortium name="The German cDNA consortium"/>
        </authorList>
    </citation>
    <scope>NUCLEOTIDE SEQUENCE [LARGE SCALE MRNA]</scope>
    <source>
        <tissue>Kidney</tissue>
    </source>
</reference>
<keyword id="KW-0966">Cell projection</keyword>
<keyword id="KW-0175">Coiled coil</keyword>
<keyword id="KW-0963">Cytoplasm</keyword>
<keyword id="KW-0206">Cytoskeleton</keyword>
<keyword id="KW-0597">Phosphoprotein</keyword>
<keyword id="KW-1185">Reference proteome</keyword>
<gene>
    <name type="primary">CTTNBP2NL</name>
</gene>
<feature type="chain" id="PRO_0000234539" description="CTTNBP2 N-terminal-like protein">
    <location>
        <begin position="1"/>
        <end position="639"/>
    </location>
</feature>
<feature type="region of interest" description="Disordered" evidence="5">
    <location>
        <begin position="387"/>
        <end position="430"/>
    </location>
</feature>
<feature type="region of interest" description="Disordered" evidence="5">
    <location>
        <begin position="463"/>
        <end position="490"/>
    </location>
</feature>
<feature type="region of interest" description="Disordered" evidence="5">
    <location>
        <begin position="511"/>
        <end position="609"/>
    </location>
</feature>
<feature type="coiled-coil region" evidence="4">
    <location>
        <begin position="87"/>
        <end position="285"/>
    </location>
</feature>
<feature type="compositionally biased region" description="Low complexity" evidence="5">
    <location>
        <begin position="407"/>
        <end position="430"/>
    </location>
</feature>
<feature type="compositionally biased region" description="Low complexity" evidence="5">
    <location>
        <begin position="467"/>
        <end position="477"/>
    </location>
</feature>
<feature type="compositionally biased region" description="Polar residues" evidence="5">
    <location>
        <begin position="511"/>
        <end position="529"/>
    </location>
</feature>
<feature type="compositionally biased region" description="Low complexity" evidence="5">
    <location>
        <begin position="587"/>
        <end position="600"/>
    </location>
</feature>
<feature type="modified residue" description="Phosphoserine" evidence="3">
    <location>
        <position position="284"/>
    </location>
</feature>
<feature type="modified residue" description="Phosphoserine" evidence="3">
    <location>
        <position position="285"/>
    </location>
</feature>
<feature type="modified residue" description="Phosphoserine" evidence="3">
    <location>
        <position position="481"/>
    </location>
</feature>
<feature type="modified residue" description="Phosphoserine" evidence="3">
    <location>
        <position position="488"/>
    </location>
</feature>
<feature type="modified residue" description="Phosphoserine" evidence="3">
    <location>
        <position position="523"/>
    </location>
</feature>
<feature type="modified residue" description="Phosphoserine" evidence="3">
    <location>
        <position position="527"/>
    </location>
</feature>
<feature type="modified residue" description="Phosphoserine" evidence="3">
    <location>
        <position position="560"/>
    </location>
</feature>
<feature type="modified residue" description="Phosphoserine" evidence="3">
    <location>
        <position position="563"/>
    </location>
</feature>
<feature type="modified residue" description="Phosphoserine" evidence="3">
    <location>
        <position position="568"/>
    </location>
</feature>
<feature type="modified residue" description="Phosphothreonine" evidence="3">
    <location>
        <position position="570"/>
    </location>
</feature>
<feature type="modified residue" description="Phosphothreonine" evidence="3">
    <location>
        <position position="590"/>
    </location>
</feature>
<feature type="modified residue" description="Phosphoserine" evidence="3">
    <location>
        <position position="592"/>
    </location>
</feature>
<evidence type="ECO:0000250" key="1">
    <source>
        <dbReference type="UniProtKB" id="Q8SX68"/>
    </source>
</evidence>
<evidence type="ECO:0000250" key="2">
    <source>
        <dbReference type="UniProtKB" id="Q99LJ0"/>
    </source>
</evidence>
<evidence type="ECO:0000250" key="3">
    <source>
        <dbReference type="UniProtKB" id="Q9P2B4"/>
    </source>
</evidence>
<evidence type="ECO:0000255" key="4"/>
<evidence type="ECO:0000256" key="5">
    <source>
        <dbReference type="SAM" id="MobiDB-lite"/>
    </source>
</evidence>
<comment type="function">
    <text evidence="1 3">Regulates lamellipodial actin dynamics in a CTTN-dependent manner (By similarity). Associates with core striatin-interacting phosphatase and kinase (STRIPAK) complex to form CTTNBP2NL-STRIPAK complexes. STRIPAK complexes have critical roles in protein (de)phosphorylation and are regulators of multiple signaling pathways including Hippo, MAPK, nuclear receptor and cytoskeleton remodeling. Different types of STRIPAK complexes are involved in a variety of biological processes such as cell growth, differentiation, apoptosis, metabolism and immune regulation (By similarity).</text>
</comment>
<comment type="subunit">
    <text evidence="1 3">Interacts with CTTN/cortactin; this interaction may redistribute CTTN to stress fibers (By similarity). May form homomers. Associates with the core of STRIPAK complexes composed of PP2A catalytic and scaffolding subunits, the striatins (PP2A regulatory subunits), the striatin-associated proteins MOB4, STRIP1 and STRIP2, PDCD10 and members of the STE20 kinases, such as STK24 and STK26 (By similarity).</text>
</comment>
<comment type="subcellular location">
    <subcellularLocation>
        <location evidence="1">Cell projection</location>
        <location evidence="1">Lamellipodium</location>
    </subcellularLocation>
    <subcellularLocation>
        <location evidence="2">Cytoplasm</location>
        <location evidence="2">Cytoskeleton</location>
        <location evidence="2">Stress fiber</location>
    </subcellularLocation>
</comment>
<dbReference type="EMBL" id="CR857938">
    <property type="protein sequence ID" value="CAH90185.1"/>
    <property type="molecule type" value="mRNA"/>
</dbReference>
<dbReference type="RefSeq" id="NP_001125066.1">
    <property type="nucleotide sequence ID" value="NM_001131594.1"/>
</dbReference>
<dbReference type="SMR" id="Q5RDH2"/>
<dbReference type="FunCoup" id="Q5RDH2">
    <property type="interactions" value="803"/>
</dbReference>
<dbReference type="STRING" id="9601.ENSPPYP00000001193"/>
<dbReference type="Ensembl" id="ENSPPYT00000039457.1">
    <property type="protein sequence ID" value="ENSPPYP00000036870.1"/>
    <property type="gene ID" value="ENSPPYG00000001024.3"/>
</dbReference>
<dbReference type="GeneID" id="100171947"/>
<dbReference type="KEGG" id="pon:100171947"/>
<dbReference type="CTD" id="55917"/>
<dbReference type="eggNOG" id="KOG1103">
    <property type="taxonomic scope" value="Eukaryota"/>
</dbReference>
<dbReference type="GeneTree" id="ENSGT00950000182852"/>
<dbReference type="HOGENOM" id="CLU_028813_1_0_1"/>
<dbReference type="InParanoid" id="Q5RDH2"/>
<dbReference type="OMA" id="ANGHFEP"/>
<dbReference type="OrthoDB" id="6021133at2759"/>
<dbReference type="Proteomes" id="UP000001595">
    <property type="component" value="Chromosome 1"/>
</dbReference>
<dbReference type="GO" id="GO:0005737">
    <property type="term" value="C:cytoplasm"/>
    <property type="evidence" value="ECO:0007669"/>
    <property type="project" value="UniProtKB-KW"/>
</dbReference>
<dbReference type="GO" id="GO:0090443">
    <property type="term" value="C:FAR/SIN/STRIPAK complex"/>
    <property type="evidence" value="ECO:0000250"/>
    <property type="project" value="UniProtKB"/>
</dbReference>
<dbReference type="GO" id="GO:0030027">
    <property type="term" value="C:lamellipodium"/>
    <property type="evidence" value="ECO:0007669"/>
    <property type="project" value="UniProtKB-SubCell"/>
</dbReference>
<dbReference type="GO" id="GO:0001725">
    <property type="term" value="C:stress fiber"/>
    <property type="evidence" value="ECO:0007669"/>
    <property type="project" value="UniProtKB-SubCell"/>
</dbReference>
<dbReference type="GO" id="GO:0051721">
    <property type="term" value="F:protein phosphatase 2A binding"/>
    <property type="evidence" value="ECO:0007669"/>
    <property type="project" value="TreeGrafter"/>
</dbReference>
<dbReference type="InterPro" id="IPR050719">
    <property type="entry name" value="Cortactin-Actin_Reg"/>
</dbReference>
<dbReference type="InterPro" id="IPR019131">
    <property type="entry name" value="Cortactin-binding_p2_N"/>
</dbReference>
<dbReference type="PANTHER" id="PTHR23166:SF9">
    <property type="entry name" value="CTTNBP2 N-TERMINAL-LIKE PROTEIN"/>
    <property type="match status" value="1"/>
</dbReference>
<dbReference type="PANTHER" id="PTHR23166">
    <property type="entry name" value="FILAMIN/GPBP-INTERACTING PROTEIN"/>
    <property type="match status" value="1"/>
</dbReference>
<dbReference type="Pfam" id="PF09727">
    <property type="entry name" value="CortBP2"/>
    <property type="match status" value="1"/>
</dbReference>